<protein>
    <recommendedName>
        <fullName evidence="32">Growth/differentiation factor 15</fullName>
        <shortName evidence="32">GDF-15</shortName>
    </recommendedName>
    <alternativeName>
        <fullName evidence="33">Macrophage inhibitory cytokine 1</fullName>
        <shortName evidence="33">MIC-1</shortName>
    </alternativeName>
    <alternativeName>
        <fullName>NSAID-activated gene 1 protein</fullName>
        <shortName>NAG-1</shortName>
    </alternativeName>
    <alternativeName>
        <fullName>NSAID-regulated gene 1 protein</fullName>
        <shortName>NRG-1</shortName>
    </alternativeName>
    <alternativeName>
        <fullName evidence="34">Placental TGF-beta</fullName>
    </alternativeName>
    <alternativeName>
        <fullName evidence="34">Placental bone morphogenetic protein</fullName>
    </alternativeName>
    <alternativeName>
        <fullName evidence="35">Prostate differentiation factor</fullName>
    </alternativeName>
</protein>
<gene>
    <name evidence="32 37" type="primary">GDF15</name>
    <name evidence="33" type="synonym">MIC1</name>
    <name evidence="35" type="synonym">PDF</name>
    <name evidence="34" type="synonym">PLAB</name>
    <name type="synonym">PTGFB</name>
</gene>
<sequence length="308" mass="34140">MPGQELRTVNGSQMLLVLLVLSWLPHGGALSLAEASRASFPGPSELHSEDSRFRELRKRYEDLLTRLRANQSWEDSNTDLVPAPAVRILTPEVRLGSGGHLHLRISRAALPEGLPEASRLHRALFRLSPTASRSWDVTRPLRRQLSLARPQAPALHLRLSPPPSQSDQLLAESSSARPQLELHLRPQAARGRRRARARNGDHCPLGPGRCCRLHTVRASLEDLGWADWVLSPREVQVTMCIGACPSQFRAANMHAQIKTSLHRLKPDTVPAPCCVPASYNPMVLIQKTDTGVSLQTYDDLLAKDCHCI</sequence>
<comment type="function">
    <text evidence="1 4 5 7 8 9 10 11 13 14 15 16 17 20 22 24 26">Hormone produced in response to various stresses to confer information about those stresses to the brain, and trigger an aversive response, characterized by nausea, vomiting, and/or loss of appetite (PubMed:23468844, PubMed:24971956, PubMed:28846097, PubMed:28846098, PubMed:28846099, PubMed:28953886, PubMed:29046435, PubMed:30639358, PubMed:31875646, PubMed:33589633, PubMed:38092039). The aversive response is both required to reduce continuing exposure to those stresses at the time of exposure and to promote avoidance behavior in the future (PubMed:30639358, PubMed:33589633, PubMed:38092039). Acts by binding to its receptor, GFRAL, activating GFRAL-expressing neurons localized in the area postrema and nucleus tractus solitarius of the brainstem (PubMed:28846097, PubMed:28846098, PubMed:28846099, PubMed:28953886, PubMed:31535977). It then triggers the activation of neurons localized within the parabrachial nucleus and central amygdala, which constitutes part of the 'emergency circuit' that shapes responses to stressful conditions (PubMed:28953886). The GDF15-GFRAL signal induces expression of genes involved in metabolism, such as lipid metabolism in adipose tissues (PubMed:31402172). Required for avoidance behavior in response to food allergens: induced downstream of mast cell activation to promote aversion and minimize harmful effects of exposure to noxious substances (By similarity). In addition to suppress appetite, also promotes weight loss by enhancing energy expenditure in muscle: acts by increasing calcium futile cycling in muscle (By similarity). Contributes to the effect of metformin, an anti-diabetic drug, on appetite reduction and weight loss: produced in the kidney in response to metformin treatment, thereby activating the GDF15-GFRAL response, leading to reduced appetite and weight (PubMed:31875646, PubMed:37060902). The contribution of GDF15 to weight loss following metformin treatment is however limited and subject to discussion (PubMed:36001956). Produced in response to anticancer drugs, such as camptothecin or cisplatin, promoting nausea, vomiting and contributing to malnutrition (By similarity). Overproduced in many cancers, promoting anorexia in cancer (cachexia) (PubMed:32661391). Responsible for the risk of nausea and vomiting during pregnancy: high levels of GDF15 during pregnancy, mostly originating from the fetus, are associated with increased nausea and vomiting (PubMed:38092039). Maternal sensitivity to nausea is probably determined by pre-pregnancy exposure to GDF15, women with naturally high level of GDF15 being less susceptible to nausea than women with low levels of GDF15 before pregnancy (PubMed:38092039). Promotes metabolic adaptation in response to systemic inflammation caused by bacterial and viral infections in order to promote tissue tolerance and prevent tissue damage (PubMed:31402172). Required for tissue tolerance in response to myocardial infarction by acting as an inhibitor of leukocyte integring activation, thereby protecting against cardiac rupture (By similarity). Inhibits growth hormone signaling on hepatocytes (By similarity).</text>
</comment>
<comment type="subunit">
    <text evidence="7 8 9 10 11 15">Homodimer; disulfide-linked (PubMed:29046435, PubMed:31535977). Interacts with GFRAL and RET; ligand of GFRAL, which mediates GDF15 internalization and cellular signaling through interaction with RET via the formation of a 2:2:2 ternary complex composed of GDF15, GFRAL and RET (PubMed:28846097, PubMed:28846098, PubMed:28846099, PubMed:28953886, PubMed:31535977).</text>
</comment>
<comment type="interaction">
    <interactant intactId="EBI-2116863">
        <id>Q99988</id>
    </interactant>
    <interactant intactId="EBI-78176">
        <id>Q13185</id>
        <label>CBX3</label>
    </interactant>
    <organismsDiffer>false</organismsDiffer>
    <experiments>3</experiments>
</comment>
<comment type="interaction">
    <interactant intactId="EBI-2116863">
        <id>Q99988</id>
    </interactant>
    <interactant intactId="EBI-27112718">
        <id>Q6UXV0</id>
        <label>GFRAL</label>
    </interactant>
    <organismsDiffer>false</organismsDiffer>
    <experiments>2</experiments>
</comment>
<comment type="interaction">
    <interactant intactId="EBI-2116863">
        <id>Q99988</id>
    </interactant>
    <interactant intactId="EBI-740785">
        <id>P49639</id>
        <label>HOXA1</label>
    </interactant>
    <organismsDiffer>false</organismsDiffer>
    <experiments>3</experiments>
</comment>
<comment type="interaction">
    <interactant intactId="EBI-2116863">
        <id>Q99988</id>
    </interactant>
    <interactant intactId="EBI-10176379">
        <id>P59991</id>
        <label>KRTAP12-2</label>
    </interactant>
    <organismsDiffer>false</organismsDiffer>
    <experiments>3</experiments>
</comment>
<comment type="interaction">
    <interactant intactId="EBI-2116863">
        <id>Q99988</id>
    </interactant>
    <interactant intactId="EBI-724076">
        <id>Q99750</id>
        <label>MDFI</label>
    </interactant>
    <organismsDiffer>false</organismsDiffer>
    <experiments>5</experiments>
</comment>
<comment type="interaction">
    <interactant intactId="EBI-2116863">
        <id>Q99988</id>
    </interactant>
    <interactant intactId="EBI-2554984">
        <id>Q9Y6A5</id>
        <label>TACC3</label>
    </interactant>
    <organismsDiffer>false</organismsDiffer>
    <experiments>3</experiments>
</comment>
<comment type="subcellular location">
    <subcellularLocation>
        <location evidence="6 11 16 18 26">Secreted</location>
    </subcellularLocation>
    <text evidence="6 11">Secreted in the plasma.</text>
</comment>
<comment type="tissue specificity">
    <text evidence="6 11 24 28">Detected in plasma (at protein level) (PubMed:28572090, PubMed:29046435). Highly expressed in placenta, with lower levels in prostate and colon and some expression in kidney (PubMed:37060902, PubMed:9348093).</text>
</comment>
<comment type="induction">
    <text evidence="11 13 14 16 18 19 20 22 25">Produced in response to various stresses, such as metabolic and toxin-induced stresses or drugs (PubMed:31402172, PubMed:31875646, PubMed:32694673, PubMed:33207247, PubMed:33589633, PubMed:36001956). Expression is activated by ATF4 and DDIT3/CHOP transcription factors downstream of the integrated stress response (ISR) (PubMed:30639358). Expressed in response to inflammatory conditions (PubMed:31402172). Expression is induced by metformin, a blood-glucose-lowering drug (PubMed:31875646, PubMed:32694673, PubMed:36001956). Expression is induced by cisplatin anticancer drug (PubMed:33207247). Also induced by physical activity (PubMed:33589633). Expression is up-regulated by obesity (PubMed:29046435). Expression is up-regulated by ketogenic diet (PubMed:38056430).</text>
</comment>
<comment type="disease" evidence="12 21 26">
    <disease id="DI-06832">
        <name>Hyperemesis gravidarum</name>
        <acronym>HG</acronym>
        <description>An autosomal dominant condition characterized by severe nausea and vomiting in pregnancy. It occurs in up to 2% of pregnancies and leads to significant weight loss, dehydration, electrolyte imbalance, and ketonuria. It is associated with both maternal and fetal morbidity.</description>
        <dbReference type="MIM" id="620730"/>
    </disease>
    <text>Disease susceptibility is associated with variants affecting the gene represented in this entry.</text>
</comment>
<comment type="miscellaneous">
    <text evidence="16 23">GDF15 was initially considered as a promising factor for the treatment of obesity due to its ability of GDF15 to reduce appetite and promote weight loss (PubMed:31875646). However, while activation of the GDF15-GFRAL signaling pathway is efficient to reduce obesity and promote weight loss in mouse, it only has limited effect in human (PubMed:36630958).</text>
</comment>
<comment type="similarity">
    <text evidence="36">Belongs to the TGF-beta family.</text>
</comment>
<comment type="online information" name="Atlas of Genetics and Cytogenetics in Oncology and Haematology">
    <link uri="https://atlasgeneticsoncology.org/gene/40701/GDF15"/>
</comment>
<comment type="online information" name="Protein Spotlight">
    <link uri="https://www.proteinspotlight.org/back_issues/270/"/>
    <text>Nausea - Issue 270 of July 2024</text>
</comment>
<accession>Q99988</accession>
<accession>O14629</accession>
<accession>P78360</accession>
<accession>Q9BWA0</accession>
<accession>Q9NRT0</accession>
<keyword id="KW-0002">3D-structure</keyword>
<keyword id="KW-0165">Cleavage on pair of basic residues</keyword>
<keyword id="KW-0202">Cytokine</keyword>
<keyword id="KW-0225">Disease variant</keyword>
<keyword id="KW-1015">Disulfide bond</keyword>
<keyword id="KW-0325">Glycoprotein</keyword>
<keyword id="KW-0372">Hormone</keyword>
<keyword id="KW-1267">Proteomics identification</keyword>
<keyword id="KW-1185">Reference proteome</keyword>
<keyword id="KW-0964">Secreted</keyword>
<keyword id="KW-0732">Signal</keyword>
<proteinExistence type="evidence at protein level"/>
<feature type="signal peptide" evidence="2">
    <location>
        <begin position="1"/>
        <end position="29"/>
    </location>
</feature>
<feature type="propeptide" id="PRO_0000033992" evidence="2">
    <location>
        <begin position="30"/>
        <end position="194"/>
    </location>
</feature>
<feature type="chain" id="PRO_0000033993" description="Growth/differentiation factor 15">
    <location>
        <begin position="195"/>
        <end position="308"/>
    </location>
</feature>
<feature type="region of interest" description="Disordered" evidence="3">
    <location>
        <begin position="152"/>
        <end position="177"/>
    </location>
</feature>
<feature type="compositionally biased region" description="Polar residues" evidence="3">
    <location>
        <begin position="165"/>
        <end position="177"/>
    </location>
</feature>
<feature type="glycosylation site" description="N-linked (GlcNAc...) asparagine" evidence="2">
    <location>
        <position position="70"/>
    </location>
</feature>
<feature type="disulfide bond" evidence="10 11 15 38 39 40 41">
    <location>
        <begin position="203"/>
        <end position="210"/>
    </location>
</feature>
<feature type="disulfide bond" evidence="10 11 15 38 39 40 41">
    <location>
        <begin position="211"/>
        <end position="274"/>
    </location>
</feature>
<feature type="disulfide bond" evidence="10 11 15 38 39 40 41">
    <location>
        <begin position="240"/>
        <end position="305"/>
    </location>
</feature>
<feature type="disulfide bond" evidence="10 11 15 38 39 40 41">
    <location>
        <begin position="244"/>
        <end position="307"/>
    </location>
</feature>
<feature type="disulfide bond" description="Interchain" evidence="11 15 38 41">
    <location>
        <position position="273"/>
    </location>
</feature>
<feature type="sequence variant" id="VAR_047646" description="In dbSNP:rs1059519." evidence="27 28 30 31">
    <original>V</original>
    <variation>L</variation>
    <location>
        <position position="9"/>
    </location>
</feature>
<feature type="sequence variant" id="VAR_010386" description="In dbSNP:rs1059369." evidence="27 28 31">
    <original>S</original>
    <variation>T</variation>
    <location>
        <position position="48"/>
    </location>
</feature>
<feature type="sequence variant" id="VAR_047647" description="In dbSNP:rs1058587." evidence="26 29">
    <original>H</original>
    <variation>D</variation>
    <location>
        <position position="202"/>
    </location>
</feature>
<feature type="sequence variant" id="VAR_088885" description="In HG; impaired secretion, the mature peptide is not secreted and the unprocessed pro-peptide is retained intracellularly; dbSNP:rs372120002." evidence="21 26">
    <original>C</original>
    <variation>G</variation>
    <location>
        <position position="211"/>
    </location>
</feature>
<feature type="mutagenesis site" description="No effect on interaction with GFRAL. Attenuates GDF15-mediated food-intake inhibition." evidence="7">
    <original>W</original>
    <variation>A</variation>
    <location>
        <position position="225"/>
    </location>
</feature>
<feature type="mutagenesis site" description="Abolished formation of a ternary complex with GFRAL and RET." evidence="15">
    <original>W</original>
    <variation>E</variation>
    <location>
        <position position="228"/>
    </location>
</feature>
<feature type="mutagenesis site" description="Reduces cellular signaling mediated by GFRAL and RET." evidence="10">
    <original>V</original>
    <variation>A</variation>
    <location>
        <position position="283"/>
    </location>
</feature>
<feature type="mutagenesis site" description="Abolishes interaction with GFRAL. Abolishes RET phosphorylation and cellular signaling mediated by GFRAL and RET." evidence="9">
    <original>V</original>
    <variation>R</variation>
    <location>
        <position position="283"/>
    </location>
</feature>
<feature type="mutagenesis site" description="Reduces cellular signaling mediated by GFRAL and RET. Abolishes interaction with GFRAL and GDF15-mediated food-intake inhibition." evidence="7 10">
    <original>I</original>
    <variation>A</variation>
    <location>
        <position position="285"/>
    </location>
</feature>
<feature type="mutagenesis site" description="Abolished formation of a ternary complex with GFRAL and RET." evidence="15">
    <original>Y</original>
    <variation>E</variation>
    <location>
        <position position="297"/>
    </location>
</feature>
<feature type="sequence conflict" description="In Ref. 1; AAB88913." evidence="36" ref="1">
    <original>V</original>
    <variation>E</variation>
    <location>
        <position position="269"/>
    </location>
</feature>
<feature type="sequence conflict" description="In Ref. 10; AAF89834." evidence="36" ref="10">
    <original>T</original>
    <variation>A</variation>
    <location>
        <position position="288"/>
    </location>
</feature>
<feature type="strand" evidence="42">
    <location>
        <begin position="204"/>
        <end position="219"/>
    </location>
</feature>
<feature type="turn" evidence="42">
    <location>
        <begin position="220"/>
        <end position="224"/>
    </location>
</feature>
<feature type="turn" evidence="42">
    <location>
        <begin position="226"/>
        <end position="228"/>
    </location>
</feature>
<feature type="strand" evidence="42">
    <location>
        <begin position="229"/>
        <end position="231"/>
    </location>
</feature>
<feature type="strand" evidence="42">
    <location>
        <begin position="233"/>
        <end position="243"/>
    </location>
</feature>
<feature type="strand" evidence="42">
    <location>
        <begin position="248"/>
        <end position="250"/>
    </location>
</feature>
<feature type="helix" evidence="42">
    <location>
        <begin position="253"/>
        <end position="264"/>
    </location>
</feature>
<feature type="turn" evidence="42">
    <location>
        <begin position="266"/>
        <end position="268"/>
    </location>
</feature>
<feature type="strand" evidence="42">
    <location>
        <begin position="273"/>
        <end position="287"/>
    </location>
</feature>
<feature type="strand" evidence="42">
    <location>
        <begin position="289"/>
        <end position="308"/>
    </location>
</feature>
<evidence type="ECO:0000250" key="1">
    <source>
        <dbReference type="UniProtKB" id="Q9Z0J7"/>
    </source>
</evidence>
<evidence type="ECO:0000255" key="2"/>
<evidence type="ECO:0000256" key="3">
    <source>
        <dbReference type="SAM" id="MobiDB-lite"/>
    </source>
</evidence>
<evidence type="ECO:0000269" key="4">
    <source>
    </source>
</evidence>
<evidence type="ECO:0000269" key="5">
    <source>
    </source>
</evidence>
<evidence type="ECO:0000269" key="6">
    <source>
    </source>
</evidence>
<evidence type="ECO:0000269" key="7">
    <source>
    </source>
</evidence>
<evidence type="ECO:0000269" key="8">
    <source>
    </source>
</evidence>
<evidence type="ECO:0000269" key="9">
    <source>
    </source>
</evidence>
<evidence type="ECO:0000269" key="10">
    <source>
    </source>
</evidence>
<evidence type="ECO:0000269" key="11">
    <source>
    </source>
</evidence>
<evidence type="ECO:0000269" key="12">
    <source>
    </source>
</evidence>
<evidence type="ECO:0000269" key="13">
    <source>
    </source>
</evidence>
<evidence type="ECO:0000269" key="14">
    <source>
    </source>
</evidence>
<evidence type="ECO:0000269" key="15">
    <source>
    </source>
</evidence>
<evidence type="ECO:0000269" key="16">
    <source>
    </source>
</evidence>
<evidence type="ECO:0000269" key="17">
    <source>
    </source>
</evidence>
<evidence type="ECO:0000269" key="18">
    <source>
    </source>
</evidence>
<evidence type="ECO:0000269" key="19">
    <source>
    </source>
</evidence>
<evidence type="ECO:0000269" key="20">
    <source>
    </source>
</evidence>
<evidence type="ECO:0000269" key="21">
    <source>
    </source>
</evidence>
<evidence type="ECO:0000269" key="22">
    <source>
    </source>
</evidence>
<evidence type="ECO:0000269" key="23">
    <source>
    </source>
</evidence>
<evidence type="ECO:0000269" key="24">
    <source>
    </source>
</evidence>
<evidence type="ECO:0000269" key="25">
    <source>
    </source>
</evidence>
<evidence type="ECO:0000269" key="26">
    <source>
    </source>
</evidence>
<evidence type="ECO:0000269" key="27">
    <source>
    </source>
</evidence>
<evidence type="ECO:0000269" key="28">
    <source>
    </source>
</evidence>
<evidence type="ECO:0000269" key="29">
    <source>
    </source>
</evidence>
<evidence type="ECO:0000269" key="30">
    <source>
    </source>
</evidence>
<evidence type="ECO:0000269" key="31">
    <source ref="5"/>
</evidence>
<evidence type="ECO:0000303" key="32">
    <source>
    </source>
</evidence>
<evidence type="ECO:0000303" key="33">
    <source>
    </source>
</evidence>
<evidence type="ECO:0000303" key="34">
    <source>
    </source>
</evidence>
<evidence type="ECO:0000303" key="35">
    <source>
    </source>
</evidence>
<evidence type="ECO:0000305" key="36"/>
<evidence type="ECO:0000312" key="37">
    <source>
        <dbReference type="HGNC" id="HGNC:30142"/>
    </source>
</evidence>
<evidence type="ECO:0007744" key="38">
    <source>
        <dbReference type="PDB" id="5VT2"/>
    </source>
</evidence>
<evidence type="ECO:0007744" key="39">
    <source>
        <dbReference type="PDB" id="5VZ3"/>
    </source>
</evidence>
<evidence type="ECO:0007744" key="40">
    <source>
        <dbReference type="PDB" id="5VZ4"/>
    </source>
</evidence>
<evidence type="ECO:0007744" key="41">
    <source>
        <dbReference type="PDB" id="6Q2J"/>
    </source>
</evidence>
<evidence type="ECO:0007829" key="42">
    <source>
        <dbReference type="PDB" id="5VZ3"/>
    </source>
</evidence>
<reference key="1">
    <citation type="journal article" date="1997" name="Biochim. Biophys. Acta">
        <title>PLAB, a novel placental bone morphogenetic protein.</title>
        <authorList>
            <person name="Hromas R."/>
            <person name="Hufford M."/>
            <person name="Sutton J."/>
            <person name="Xu D."/>
            <person name="Li Y."/>
            <person name="Lu L."/>
        </authorList>
    </citation>
    <scope>NUCLEOTIDE SEQUENCE [MRNA]</scope>
    <scope>VARIANT ASP-202</scope>
    <source>
        <tissue>Placenta</tissue>
    </source>
</reference>
<reference key="2">
    <citation type="journal article" date="1997" name="J. Biochem.">
        <title>Human cDNA encoding a novel TGF-beta superfamily protein highly expressed in placenta.</title>
        <authorList>
            <person name="Yokoyama-Kobayashi M."/>
            <person name="Saeki M."/>
            <person name="Sekine S."/>
            <person name="Kato S."/>
        </authorList>
    </citation>
    <scope>NUCLEOTIDE SEQUENCE [MRNA]</scope>
    <scope>VARIANTS LEU-9 AND THR-48</scope>
    <scope>TISSUE SPECIFICITY</scope>
    <source>
        <tissue>Fibrosarcoma</tissue>
    </source>
</reference>
<reference key="3">
    <citation type="journal article" date="1997" name="Proc. Natl. Acad. Sci. U.S.A.">
        <title>MIC-1, a novel macrophage inhibitory cytokine, is a divergent member of the TGF-beta superfamily.</title>
        <authorList>
            <person name="Bootcov M.R."/>
            <person name="Bauskin A.R."/>
            <person name="Valenzuela S.M."/>
            <person name="Moore A.G."/>
            <person name="Bansal M."/>
            <person name="He X.Y."/>
            <person name="Zhang H.P."/>
            <person name="Donnellan M."/>
            <person name="Mahler S."/>
            <person name="Pryor K."/>
            <person name="Walsh B.J."/>
            <person name="Nicholson R.C."/>
            <person name="Fairlie W.D."/>
            <person name="Por S.B."/>
            <person name="Robbins J.M."/>
            <person name="Breit S.N."/>
        </authorList>
    </citation>
    <scope>NUCLEOTIDE SEQUENCE [MRNA]</scope>
    <scope>VARIANTS LEU-9 AND THR-48</scope>
</reference>
<reference key="4">
    <citation type="journal article" date="1998" name="J. Biol. Chem.">
        <title>Cloning and characterization of a novel member of the transforming growth factor-beta/bone morphogenetic protein family.</title>
        <authorList>
            <person name="Paralkar V.M."/>
            <person name="Vail A.L."/>
            <person name="Grasser W.A."/>
            <person name="Brown T.A."/>
            <person name="Xu H."/>
            <person name="Vukicevic S."/>
            <person name="Ke H.Z."/>
            <person name="Qi H."/>
            <person name="Owen T.A."/>
            <person name="Thompson D.D."/>
        </authorList>
    </citation>
    <scope>NUCLEOTIDE SEQUENCE [MRNA]</scope>
    <scope>VARIANT LEU-9</scope>
    <source>
        <tissue>Placenta</tissue>
    </source>
</reference>
<reference key="5">
    <citation type="submission" date="2003-05" db="EMBL/GenBank/DDBJ databases">
        <title>Cloning of human full-length CDSs in BD Creator(TM) system donor vector.</title>
        <authorList>
            <person name="Kalnine N."/>
            <person name="Chen X."/>
            <person name="Rolfs A."/>
            <person name="Halleck A."/>
            <person name="Hines L."/>
            <person name="Eisenstein S."/>
            <person name="Koundinya M."/>
            <person name="Raphael J."/>
            <person name="Moreira D."/>
            <person name="Kelley T."/>
            <person name="LaBaer J."/>
            <person name="Lin Y."/>
            <person name="Phelan M."/>
            <person name="Farmer A."/>
        </authorList>
    </citation>
    <scope>NUCLEOTIDE SEQUENCE [LARGE SCALE MRNA]</scope>
    <scope>VARIANTS LEU-9 AND THR-48</scope>
</reference>
<reference key="6">
    <citation type="journal article" date="2004" name="Nat. Genet.">
        <title>Complete sequencing and characterization of 21,243 full-length human cDNAs.</title>
        <authorList>
            <person name="Ota T."/>
            <person name="Suzuki Y."/>
            <person name="Nishikawa T."/>
            <person name="Otsuki T."/>
            <person name="Sugiyama T."/>
            <person name="Irie R."/>
            <person name="Wakamatsu A."/>
            <person name="Hayashi K."/>
            <person name="Sato H."/>
            <person name="Nagai K."/>
            <person name="Kimura K."/>
            <person name="Makita H."/>
            <person name="Sekine M."/>
            <person name="Obayashi M."/>
            <person name="Nishi T."/>
            <person name="Shibahara T."/>
            <person name="Tanaka T."/>
            <person name="Ishii S."/>
            <person name="Yamamoto J."/>
            <person name="Saito K."/>
            <person name="Kawai Y."/>
            <person name="Isono Y."/>
            <person name="Nakamura Y."/>
            <person name="Nagahari K."/>
            <person name="Murakami K."/>
            <person name="Yasuda T."/>
            <person name="Iwayanagi T."/>
            <person name="Wagatsuma M."/>
            <person name="Shiratori A."/>
            <person name="Sudo H."/>
            <person name="Hosoiri T."/>
            <person name="Kaku Y."/>
            <person name="Kodaira H."/>
            <person name="Kondo H."/>
            <person name="Sugawara M."/>
            <person name="Takahashi M."/>
            <person name="Kanda K."/>
            <person name="Yokoi T."/>
            <person name="Furuya T."/>
            <person name="Kikkawa E."/>
            <person name="Omura Y."/>
            <person name="Abe K."/>
            <person name="Kamihara K."/>
            <person name="Katsuta N."/>
            <person name="Sato K."/>
            <person name="Tanikawa M."/>
            <person name="Yamazaki M."/>
            <person name="Ninomiya K."/>
            <person name="Ishibashi T."/>
            <person name="Yamashita H."/>
            <person name="Murakawa K."/>
            <person name="Fujimori K."/>
            <person name="Tanai H."/>
            <person name="Kimata M."/>
            <person name="Watanabe M."/>
            <person name="Hiraoka S."/>
            <person name="Chiba Y."/>
            <person name="Ishida S."/>
            <person name="Ono Y."/>
            <person name="Takiguchi S."/>
            <person name="Watanabe S."/>
            <person name="Yosida M."/>
            <person name="Hotuta T."/>
            <person name="Kusano J."/>
            <person name="Kanehori K."/>
            <person name="Takahashi-Fujii A."/>
            <person name="Hara H."/>
            <person name="Tanase T.-O."/>
            <person name="Nomura Y."/>
            <person name="Togiya S."/>
            <person name="Komai F."/>
            <person name="Hara R."/>
            <person name="Takeuchi K."/>
            <person name="Arita M."/>
            <person name="Imose N."/>
            <person name="Musashino K."/>
            <person name="Yuuki H."/>
            <person name="Oshima A."/>
            <person name="Sasaki N."/>
            <person name="Aotsuka S."/>
            <person name="Yoshikawa Y."/>
            <person name="Matsunawa H."/>
            <person name="Ichihara T."/>
            <person name="Shiohata N."/>
            <person name="Sano S."/>
            <person name="Moriya S."/>
            <person name="Momiyama H."/>
            <person name="Satoh N."/>
            <person name="Takami S."/>
            <person name="Terashima Y."/>
            <person name="Suzuki O."/>
            <person name="Nakagawa S."/>
            <person name="Senoh A."/>
            <person name="Mizoguchi H."/>
            <person name="Goto Y."/>
            <person name="Shimizu F."/>
            <person name="Wakebe H."/>
            <person name="Hishigaki H."/>
            <person name="Watanabe T."/>
            <person name="Sugiyama A."/>
            <person name="Takemoto M."/>
            <person name="Kawakami B."/>
            <person name="Yamazaki M."/>
            <person name="Watanabe K."/>
            <person name="Kumagai A."/>
            <person name="Itakura S."/>
            <person name="Fukuzumi Y."/>
            <person name="Fujimori Y."/>
            <person name="Komiyama M."/>
            <person name="Tashiro H."/>
            <person name="Tanigami A."/>
            <person name="Fujiwara T."/>
            <person name="Ono T."/>
            <person name="Yamada K."/>
            <person name="Fujii Y."/>
            <person name="Ozaki K."/>
            <person name="Hirao M."/>
            <person name="Ohmori Y."/>
            <person name="Kawabata A."/>
            <person name="Hikiji T."/>
            <person name="Kobatake N."/>
            <person name="Inagaki H."/>
            <person name="Ikema Y."/>
            <person name="Okamoto S."/>
            <person name="Okitani R."/>
            <person name="Kawakami T."/>
            <person name="Noguchi S."/>
            <person name="Itoh T."/>
            <person name="Shigeta K."/>
            <person name="Senba T."/>
            <person name="Matsumura K."/>
            <person name="Nakajima Y."/>
            <person name="Mizuno T."/>
            <person name="Morinaga M."/>
            <person name="Sasaki M."/>
            <person name="Togashi T."/>
            <person name="Oyama M."/>
            <person name="Hata H."/>
            <person name="Watanabe M."/>
            <person name="Komatsu T."/>
            <person name="Mizushima-Sugano J."/>
            <person name="Satoh T."/>
            <person name="Shirai Y."/>
            <person name="Takahashi Y."/>
            <person name="Nakagawa K."/>
            <person name="Okumura K."/>
            <person name="Nagase T."/>
            <person name="Nomura N."/>
            <person name="Kikuchi H."/>
            <person name="Masuho Y."/>
            <person name="Yamashita R."/>
            <person name="Nakai K."/>
            <person name="Yada T."/>
            <person name="Nakamura Y."/>
            <person name="Ohara O."/>
            <person name="Isogai T."/>
            <person name="Sugano S."/>
        </authorList>
    </citation>
    <scope>NUCLEOTIDE SEQUENCE [LARGE SCALE MRNA]</scope>
    <source>
        <tissue>Placenta</tissue>
    </source>
</reference>
<reference key="7">
    <citation type="journal article" date="2004" name="Nature">
        <title>The DNA sequence and biology of human chromosome 19.</title>
        <authorList>
            <person name="Grimwood J."/>
            <person name="Gordon L.A."/>
            <person name="Olsen A.S."/>
            <person name="Terry A."/>
            <person name="Schmutz J."/>
            <person name="Lamerdin J.E."/>
            <person name="Hellsten U."/>
            <person name="Goodstein D."/>
            <person name="Couronne O."/>
            <person name="Tran-Gyamfi M."/>
            <person name="Aerts A."/>
            <person name="Altherr M."/>
            <person name="Ashworth L."/>
            <person name="Bajorek E."/>
            <person name="Black S."/>
            <person name="Branscomb E."/>
            <person name="Caenepeel S."/>
            <person name="Carrano A.V."/>
            <person name="Caoile C."/>
            <person name="Chan Y.M."/>
            <person name="Christensen M."/>
            <person name="Cleland C.A."/>
            <person name="Copeland A."/>
            <person name="Dalin E."/>
            <person name="Dehal P."/>
            <person name="Denys M."/>
            <person name="Detter J.C."/>
            <person name="Escobar J."/>
            <person name="Flowers D."/>
            <person name="Fotopulos D."/>
            <person name="Garcia C."/>
            <person name="Georgescu A.M."/>
            <person name="Glavina T."/>
            <person name="Gomez M."/>
            <person name="Gonzales E."/>
            <person name="Groza M."/>
            <person name="Hammon N."/>
            <person name="Hawkins T."/>
            <person name="Haydu L."/>
            <person name="Ho I."/>
            <person name="Huang W."/>
            <person name="Israni S."/>
            <person name="Jett J."/>
            <person name="Kadner K."/>
            <person name="Kimball H."/>
            <person name="Kobayashi A."/>
            <person name="Larionov V."/>
            <person name="Leem S.-H."/>
            <person name="Lopez F."/>
            <person name="Lou Y."/>
            <person name="Lowry S."/>
            <person name="Malfatti S."/>
            <person name="Martinez D."/>
            <person name="McCready P.M."/>
            <person name="Medina C."/>
            <person name="Morgan J."/>
            <person name="Nelson K."/>
            <person name="Nolan M."/>
            <person name="Ovcharenko I."/>
            <person name="Pitluck S."/>
            <person name="Pollard M."/>
            <person name="Popkie A.P."/>
            <person name="Predki P."/>
            <person name="Quan G."/>
            <person name="Ramirez L."/>
            <person name="Rash S."/>
            <person name="Retterer J."/>
            <person name="Rodriguez A."/>
            <person name="Rogers S."/>
            <person name="Salamov A."/>
            <person name="Salazar A."/>
            <person name="She X."/>
            <person name="Smith D."/>
            <person name="Slezak T."/>
            <person name="Solovyev V."/>
            <person name="Thayer N."/>
            <person name="Tice H."/>
            <person name="Tsai M."/>
            <person name="Ustaszewska A."/>
            <person name="Vo N."/>
            <person name="Wagner M."/>
            <person name="Wheeler J."/>
            <person name="Wu K."/>
            <person name="Xie G."/>
            <person name="Yang J."/>
            <person name="Dubchak I."/>
            <person name="Furey T.S."/>
            <person name="DeJong P."/>
            <person name="Dickson M."/>
            <person name="Gordon D."/>
            <person name="Eichler E.E."/>
            <person name="Pennacchio L.A."/>
            <person name="Richardson P."/>
            <person name="Stubbs L."/>
            <person name="Rokhsar D.S."/>
            <person name="Myers R.M."/>
            <person name="Rubin E.M."/>
            <person name="Lucas S.M."/>
        </authorList>
    </citation>
    <scope>NUCLEOTIDE SEQUENCE [LARGE SCALE GENOMIC DNA]</scope>
</reference>
<reference key="8">
    <citation type="submission" date="2005-07" db="EMBL/GenBank/DDBJ databases">
        <authorList>
            <person name="Mural R.J."/>
            <person name="Istrail S."/>
            <person name="Sutton G.G."/>
            <person name="Florea L."/>
            <person name="Halpern A.L."/>
            <person name="Mobarry C.M."/>
            <person name="Lippert R."/>
            <person name="Walenz B."/>
            <person name="Shatkay H."/>
            <person name="Dew I."/>
            <person name="Miller J.R."/>
            <person name="Flanigan M.J."/>
            <person name="Edwards N.J."/>
            <person name="Bolanos R."/>
            <person name="Fasulo D."/>
            <person name="Halldorsson B.V."/>
            <person name="Hannenhalli S."/>
            <person name="Turner R."/>
            <person name="Yooseph S."/>
            <person name="Lu F."/>
            <person name="Nusskern D.R."/>
            <person name="Shue B.C."/>
            <person name="Zheng X.H."/>
            <person name="Zhong F."/>
            <person name="Delcher A.L."/>
            <person name="Huson D.H."/>
            <person name="Kravitz S.A."/>
            <person name="Mouchard L."/>
            <person name="Reinert K."/>
            <person name="Remington K.A."/>
            <person name="Clark A.G."/>
            <person name="Waterman M.S."/>
            <person name="Eichler E.E."/>
            <person name="Adams M.D."/>
            <person name="Hunkapiller M.W."/>
            <person name="Myers E.W."/>
            <person name="Venter J.C."/>
        </authorList>
    </citation>
    <scope>NUCLEOTIDE SEQUENCE [LARGE SCALE GENOMIC DNA]</scope>
</reference>
<reference key="9">
    <citation type="journal article" date="2004" name="Genome Res.">
        <title>The status, quality, and expansion of the NIH full-length cDNA project: the Mammalian Gene Collection (MGC).</title>
        <authorList>
            <consortium name="The MGC Project Team"/>
        </authorList>
    </citation>
    <scope>NUCLEOTIDE SEQUENCE [LARGE SCALE MRNA]</scope>
    <source>
        <tissue>Muscle</tissue>
    </source>
</reference>
<reference key="10">
    <citation type="journal article" date="1997" name="Gene">
        <title>Identification of a novel member of the TGF-beta superfamily highly expressed in human placenta.</title>
        <authorList>
            <person name="Lawton L.N."/>
            <person name="de Fatima Bonaldo M."/>
            <person name="Jelenc P.C."/>
            <person name="Qiu L."/>
            <person name="Baumes S.A."/>
            <person name="Marcelino R.A."/>
            <person name="de Jesus G.M."/>
            <person name="Wellington S."/>
            <person name="Knowles J.A."/>
            <person name="Warburton D."/>
            <person name="Brown S."/>
            <person name="Soares M.B."/>
        </authorList>
    </citation>
    <scope>NUCLEOTIDE SEQUENCE [GENOMIC DNA] OF 14-308</scope>
</reference>
<reference key="11">
    <citation type="journal article" date="2001" name="Mol. Pharmacol.">
        <title>Cyclooxygenase inhibitors regulate the expression of a TGF-beta superfamily member that has proapoptotic and antitumorigenic activities.</title>
        <authorList>
            <person name="Baek S.J."/>
            <person name="Kim K.S."/>
            <person name="Nixon J.B."/>
            <person name="Wilson L.C."/>
            <person name="Eling T.E."/>
        </authorList>
    </citation>
    <scope>NUCLEOTIDE SEQUENCE [MRNA] OF 264-308</scope>
</reference>
<reference key="12">
    <citation type="journal article" date="2013" name="PLoS ONE">
        <title>TGF-b superfamily cytokine MIC-1/GDF15 is a physiological appetite and body weight regulator.</title>
        <authorList>
            <person name="Tsai V.W."/>
            <person name="Macia L."/>
            <person name="Johnen H."/>
            <person name="Kuffner T."/>
            <person name="Manadhar R."/>
            <person name="Joergensen S.B."/>
            <person name="Lee-Ng K.K."/>
            <person name="Zhang H.P."/>
            <person name="Wu L."/>
            <person name="Marquis C.P."/>
            <person name="Jiang L."/>
            <person name="Husaini Y."/>
            <person name="Lin S."/>
            <person name="Herzog H."/>
            <person name="Brown D.A."/>
            <person name="Sainsbury A."/>
            <person name="Breit S.N."/>
        </authorList>
    </citation>
    <scope>FUNCTION</scope>
</reference>
<reference key="13">
    <citation type="journal article" date="2014" name="PLoS ONE">
        <title>The anorectic actions of the TGFbeta cytokine MIC-1/GDF15 require an intact brainstem area postrema and nucleus of the solitary tract.</title>
        <authorList>
            <person name="Tsai V.W."/>
            <person name="Manandhar R."/>
            <person name="Joergensen S.B."/>
            <person name="Lee-Ng K.K."/>
            <person name="Zhang H.P."/>
            <person name="Marquis C.P."/>
            <person name="Jiang L."/>
            <person name="Husaini Y."/>
            <person name="Lin S."/>
            <person name="Sainsbury A."/>
            <person name="Sawchenko P.E."/>
            <person name="Brown D.A."/>
            <person name="Breit S.N."/>
        </authorList>
    </citation>
    <scope>FUNCTION</scope>
</reference>
<reference key="14">
    <citation type="journal article" date="2017" name="EMBO Mol. Med.">
        <title>GDF15 is a heart-derived hormone that regulates body growth.</title>
        <authorList>
            <person name="Wang T."/>
            <person name="Liu J."/>
            <person name="McDonald C."/>
            <person name="Lupino K."/>
            <person name="Zhai X."/>
            <person name="Wilkins B.J."/>
            <person name="Hakonarson H."/>
            <person name="Pei L."/>
        </authorList>
    </citation>
    <scope>TISSUE SPECIFICITY</scope>
    <scope>SUBCELLULAR LOCATION</scope>
</reference>
<reference key="15">
    <citation type="journal article" date="2017" name="Nat. Med.">
        <title>GFRAL is the receptor for GDF15 and the ligand promotes weight loss in mice and nonhuman primates.</title>
        <authorList>
            <person name="Mullican S.E."/>
            <person name="Lin-Schmidt X."/>
            <person name="Chin C.N."/>
            <person name="Chavez J.A."/>
            <person name="Furman J.L."/>
            <person name="Armstrong A.A."/>
            <person name="Beck S.C."/>
            <person name="South V.J."/>
            <person name="Dinh T.Q."/>
            <person name="Cash-Mason T.D."/>
            <person name="Cavanaugh C.R."/>
            <person name="Nelson S."/>
            <person name="Huang C."/>
            <person name="Hunter M.J."/>
            <person name="Rangwala S.M."/>
        </authorList>
    </citation>
    <scope>FUNCTION</scope>
    <scope>INTERACTION WITH GFRAL</scope>
    <scope>MUTAGENESIS OF TRP-225 AND ILE-285</scope>
</reference>
<reference key="16">
    <citation type="journal article" date="2017" name="Nat. Med.">
        <title>GFRAL is the receptor for GDF15 and is required for the anti-obesity effects of the ligand.</title>
        <authorList>
            <person name="Yang L."/>
            <person name="Chang C.C."/>
            <person name="Sun Z."/>
            <person name="Madsen D."/>
            <person name="Zhu H."/>
            <person name="Padkjaer S.B."/>
            <person name="Wu X."/>
            <person name="Huang T."/>
            <person name="Hultman K."/>
            <person name="Paulsen S.J."/>
            <person name="Wang J."/>
            <person name="Bugge A."/>
            <person name="Frantzen J.B."/>
            <person name="Noergaard P."/>
            <person name="Jeppesen J.F."/>
            <person name="Yang Z."/>
            <person name="Secher A."/>
            <person name="Chen H."/>
            <person name="Li X."/>
            <person name="John L.M."/>
            <person name="Shan B."/>
            <person name="He Z."/>
            <person name="Gao X."/>
            <person name="Su J."/>
            <person name="Hansen K.T."/>
            <person name="Yang W."/>
            <person name="Joergensen S.B."/>
        </authorList>
    </citation>
    <scope>FUNCTION</scope>
    <scope>INTERACTION WITH GFRAL</scope>
    <scope>MUTAGENESIS OF VAL-283</scope>
</reference>
<reference key="17">
    <citation type="journal article" date="2017" name="Nat. Med.">
        <title>The metabolic effects of GDF15 are mediated by the orphan receptor GFRAL.</title>
        <authorList>
            <person name="Emmerson P.J."/>
            <person name="Wang F."/>
            <person name="Du Y."/>
            <person name="Liu Q."/>
            <person name="Pickard R.T."/>
            <person name="Gonciarz M.D."/>
            <person name="Coskun T."/>
            <person name="Hamang M.J."/>
            <person name="Sindelar D.K."/>
            <person name="Ballman K.K."/>
            <person name="Foltz L.A."/>
            <person name="Muppidi A."/>
            <person name="Alsina-Fernandez J."/>
            <person name="Barnard G.C."/>
            <person name="Tang J.X."/>
            <person name="Liu X."/>
            <person name="Mao X."/>
            <person name="Siegel R."/>
            <person name="Sloan J.H."/>
            <person name="Mitchell P.J."/>
            <person name="Zhang B.B."/>
            <person name="Gimeno R.E."/>
            <person name="Shan B."/>
            <person name="Wu X."/>
        </authorList>
    </citation>
    <scope>FUNCTION</scope>
    <scope>INTERACTION WITH GFRAL</scope>
</reference>
<reference key="18">
    <citation type="journal article" date="2018" name="Nat. Commun.">
        <title>Placenta and appetite genes GDF15 and IGFBP7 are associated with hyperemesis gravidarum.</title>
        <authorList>
            <consortium name="23andMe Research Team"/>
            <person name="Fejzo M.S."/>
            <person name="Sazonova O.V."/>
            <person name="Sathirapongsasuti J.F."/>
            <person name="Hallgrimsdottir I.B."/>
            <person name="Vacic V."/>
            <person name="MacGibbon K.W."/>
            <person name="Schoenberg F.P."/>
            <person name="Mancuso N."/>
            <person name="Slamon D.J."/>
            <person name="Mullin P.M."/>
        </authorList>
    </citation>
    <scope>INVOLVEMENT IN HG</scope>
</reference>
<reference key="19">
    <citation type="journal article" date="2019" name="Cell">
        <title>GDF15 is an inflammation-induced central mediator of tissue tolerance.</title>
        <authorList>
            <person name="Luan H.H."/>
            <person name="Wang A."/>
            <person name="Hilliard B.K."/>
            <person name="Carvalho F."/>
            <person name="Rosen C.E."/>
            <person name="Ahasic A.M."/>
            <person name="Herzog E.L."/>
            <person name="Kang I."/>
            <person name="Pisani M.A."/>
            <person name="Yu S."/>
            <person name="Zhang C."/>
            <person name="Ring A.M."/>
            <person name="Young L.H."/>
            <person name="Medzhitov R."/>
        </authorList>
    </citation>
    <scope>FUNCTION</scope>
    <scope>INDUCTION</scope>
</reference>
<reference key="20">
    <citation type="journal article" date="2019" name="Cell Metab.">
        <title>GDF15 provides an endocrine signal of nutritional stress in mice and humans.</title>
        <authorList>
            <person name="Patel S."/>
            <person name="Alvarez-Guaita A."/>
            <person name="Melvin A."/>
            <person name="Rimmington D."/>
            <person name="Dattilo A."/>
            <person name="Miedzybrodzka E.L."/>
            <person name="Cimino I."/>
            <person name="Maurin A.C."/>
            <person name="Roberts G.P."/>
            <person name="Meek C.L."/>
            <person name="Virtue S."/>
            <person name="Sparks L.M."/>
            <person name="Parsons S.A."/>
            <person name="Redman L.M."/>
            <person name="Bray G.A."/>
            <person name="Liou A.P."/>
            <person name="Woods R.M."/>
            <person name="Parry S.A."/>
            <person name="Jeppesen P.B."/>
            <person name="Kolnes A.J."/>
            <person name="Harding H.P."/>
            <person name="Ron D."/>
            <person name="Vidal-Puig A."/>
            <person name="Reimann F."/>
            <person name="Gribble F.M."/>
            <person name="Hulston C.J."/>
            <person name="Farooqi I.S."/>
            <person name="Fafournoux P."/>
            <person name="Smith S.R."/>
            <person name="Jensen J."/>
            <person name="Breen D."/>
            <person name="Wu Z."/>
            <person name="Zhang B.B."/>
            <person name="Coll A.P."/>
            <person name="Savage D.B."/>
            <person name="O'Rahilly S."/>
        </authorList>
    </citation>
    <scope>FUNCTION</scope>
    <scope>INDUCTION</scope>
</reference>
<reference key="21">
    <citation type="journal article" date="2019" name="Nat. Metab.">
        <title>Metformin-induced increases in GDF15 are important for suppressing appetite and promoting weight loss.</title>
        <authorList>
            <person name="Day E.A."/>
            <person name="Ford R.J."/>
            <person name="Smith B.K."/>
            <person name="Mohammadi-Shemirani P."/>
            <person name="Morrow M.R."/>
            <person name="Gutgesell R.M."/>
            <person name="Lu R."/>
            <person name="Raphenya A.R."/>
            <person name="Kabiri M."/>
            <person name="McArthur A.G."/>
            <person name="McInnes N."/>
            <person name="Hess S."/>
            <person name="Pare G."/>
            <person name="Gerstein H.C."/>
            <person name="Steinberg G.R."/>
        </authorList>
    </citation>
    <scope>SUBCELLULAR LOCATION</scope>
    <scope>INDUCTION</scope>
</reference>
<reference key="22">
    <citation type="journal article" date="2020" name="Cell Metab.">
        <title>GDF-15 neutralization alleviates platinum-based chemotherapy-induced emesis, anorexia, and weight loss in mice and nonhuman primates.</title>
        <authorList>
            <person name="Breen D.M."/>
            <person name="Kim H."/>
            <person name="Bennett D."/>
            <person name="Calle R.A."/>
            <person name="Collins S."/>
            <person name="Esquejo R.M."/>
            <person name="He T."/>
            <person name="Joaquim S."/>
            <person name="Joyce A."/>
            <person name="Lambert M."/>
            <person name="Lin L."/>
            <person name="Pettersen B."/>
            <person name="Qiao S."/>
            <person name="Rossulek M."/>
            <person name="Weber G."/>
            <person name="Wu Z."/>
            <person name="Zhang B.B."/>
            <person name="Birnbaum M.J."/>
        </authorList>
    </citation>
    <scope>INDUCTION</scope>
</reference>
<reference key="23">
    <citation type="journal article" date="2020" name="Nature">
        <title>GDF15 mediates the effects of metformin on body weight and energy balance.</title>
        <authorList>
            <person name="Coll A.P."/>
            <person name="Chen M."/>
            <person name="Taskar P."/>
            <person name="Rimmington D."/>
            <person name="Patel S."/>
            <person name="Tadross J.A."/>
            <person name="Cimino I."/>
            <person name="Yang M."/>
            <person name="Welsh P."/>
            <person name="Virtue S."/>
            <person name="Goldspink D.A."/>
            <person name="Miedzybrodzka E.L."/>
            <person name="Konopka A.R."/>
            <person name="Esponda R.R."/>
            <person name="Huang J.T."/>
            <person name="Tung Y.C.L."/>
            <person name="Rodriguez-Cuenca S."/>
            <person name="Tomaz R.A."/>
            <person name="Harding H.P."/>
            <person name="Melvin A."/>
            <person name="Yeo G.S.H."/>
            <person name="Preiss D."/>
            <person name="Vidal-Puig A."/>
            <person name="Vallier L."/>
            <person name="Nair K.S."/>
            <person name="Wareham N.J."/>
            <person name="Ron D."/>
            <person name="Gribble F.M."/>
            <person name="Reimann F."/>
            <person name="Sattar N."/>
            <person name="Savage D.B."/>
            <person name="Allan B.B."/>
            <person name="O'Rahilly S."/>
        </authorList>
    </citation>
    <scope>FUNCTION</scope>
    <scope>SUBCELLULAR LOCATION</scope>
    <scope>INDUCTION</scope>
</reference>
<reference key="24">
    <citation type="journal article" date="2020" name="Nat. Med.">
        <title>Antibody-mediated inhibition of GDF15-GFRAL activity reverses cancer cachexia in mice.</title>
        <authorList>
            <person name="Suriben R."/>
            <person name="Chen M."/>
            <person name="Higbee J."/>
            <person name="Oeffinger J."/>
            <person name="Ventura R."/>
            <person name="Li B."/>
            <person name="Mondal K."/>
            <person name="Gao Z."/>
            <person name="Ayupova D."/>
            <person name="Taskar P."/>
            <person name="Li D."/>
            <person name="Starck S.R."/>
            <person name="Chen H.H."/>
            <person name="McEntee M."/>
            <person name="Katewa S.D."/>
            <person name="Phung V."/>
            <person name="Wang M."/>
            <person name="Kekatpure A."/>
            <person name="Lakshminarasimhan D."/>
            <person name="White A."/>
            <person name="Olland A."/>
            <person name="Haldankar R."/>
            <person name="Solloway M.J."/>
            <person name="Hsu J.Y."/>
            <person name="Wang Y."/>
            <person name="Tang J."/>
            <person name="Lindhout D.A."/>
            <person name="Allan B.B."/>
        </authorList>
    </citation>
    <scope>FUNCTION</scope>
</reference>
<reference key="25">
    <citation type="journal article" date="2021" name="Nat. Commun.">
        <title>Pharmacological but not physiological GDF15 suppresses feeding and the motivation to exercise.</title>
        <authorList>
            <person name="Klein A.B."/>
            <person name="Nicolaisen T.S."/>
            <person name="Oertenblad N."/>
            <person name="Gejl K.D."/>
            <person name="Jensen R."/>
            <person name="Fritzen A.M."/>
            <person name="Larsen E.L."/>
            <person name="Karstoft K."/>
            <person name="Poulsen H.E."/>
            <person name="Morville T."/>
            <person name="Sahl R.E."/>
            <person name="Helge J.W."/>
            <person name="Lund J."/>
            <person name="Falk S."/>
            <person name="Lyngbaek M."/>
            <person name="Ellingsgaard H."/>
            <person name="Pedersen B.K."/>
            <person name="Lu W."/>
            <person name="Finan B."/>
            <person name="Joergensen S.B."/>
            <person name="Seeley R.J."/>
            <person name="Kleinert M."/>
            <person name="Kiens B."/>
            <person name="Richter E.A."/>
            <person name="Clemmensen C."/>
        </authorList>
    </citation>
    <scope>FUNCTION</scope>
</reference>
<reference key="26">
    <citation type="journal article" date="2022" name="BJOG">
        <title>Whole-exome sequencing uncovers new variants in GDF15 associated with hyperemesis gravidarum.</title>
        <authorList>
            <person name="Fejzo M.S."/>
            <person name="MacGibbon K.W."/>
            <person name="First O."/>
            <person name="Quan C."/>
            <person name="Mullin P.M."/>
        </authorList>
    </citation>
    <scope>VARIANT HG GLY-211</scope>
</reference>
<reference key="27">
    <citation type="journal article" date="2023" name="Cell Metab.">
        <title>GDF15 is a major determinant of ketogenic diet-induced weight loss.</title>
        <authorList>
            <person name="Lu J.F."/>
            <person name="Zhu M.Q."/>
            <person name="Xia B."/>
            <person name="Zhang N.N."/>
            <person name="Liu X.P."/>
            <person name="Liu H."/>
            <person name="Zhang R.X."/>
            <person name="Xiao J.Y."/>
            <person name="Yang H."/>
            <person name="Zhang Y.Q."/>
            <person name="Li X.M."/>
            <person name="Wu J.W."/>
        </authorList>
    </citation>
    <scope>INDUCTION</scope>
</reference>
<reference key="28">
    <citation type="journal article" date="2022" name="Cell Rep.">
        <title>The GDF15-GFRAL pathway is dispensable for the effects of metformin on energy balance.</title>
        <authorList>
            <person name="Klein A.B."/>
            <person name="Nicolaisen T.S."/>
            <person name="Johann K."/>
            <person name="Fritzen A.M."/>
            <person name="Mathiesen C.V."/>
            <person name="Gil C."/>
            <person name="Pilmark N.S."/>
            <person name="Karstoft K."/>
            <person name="Blond M.B."/>
            <person name="Quist J.S."/>
            <person name="Seeley R.J."/>
            <person name="Faerch K."/>
            <person name="Lund J."/>
            <person name="Kleinert M."/>
            <person name="Clemmensen C."/>
        </authorList>
    </citation>
    <scope>FUNCTION</scope>
    <scope>INDUCTION</scope>
</reference>
<reference key="29">
    <citation type="journal article" date="2023" name="Cell Metab.">
        <title>Discovery, development, and clinical proof of mechanism of LY3463251, a long-acting GDF15 receptor agonist.</title>
        <authorList>
            <person name="Benichou O."/>
            <person name="Coskun T."/>
            <person name="Gonciarz M.D."/>
            <person name="Garhyan P."/>
            <person name="Adams A.C."/>
            <person name="Du Y."/>
            <person name="Dunbar J.D."/>
            <person name="Martin J.A."/>
            <person name="Mather K.J."/>
            <person name="Pickard R.T."/>
            <person name="Reynolds V.L."/>
            <person name="Robins D.A."/>
            <person name="Zvada S.P."/>
            <person name="Emmerson P.J."/>
        </authorList>
    </citation>
    <scope>POSSIBLE ROLE IN THE TREATMENT OF OBESITY</scope>
</reference>
<reference key="30">
    <citation type="journal article" date="2023" name="Cell Metab.">
        <title>Metformin triggers a kidney GDF15-dependent area postrema axis to regulate food intake and body weight.</title>
        <authorList>
            <person name="Zhang S.Y."/>
            <person name="Bruce K."/>
            <person name="Danaei Z."/>
            <person name="Li R.J.W."/>
            <person name="Barros D.R."/>
            <person name="Kuah R."/>
            <person name="Lim Y.M."/>
            <person name="Mariani L.H."/>
            <person name="Cherney D.Z."/>
            <person name="Chiu J.F.M."/>
            <person name="Reich H.N."/>
            <person name="Lam T.K.T."/>
        </authorList>
    </citation>
    <scope>FUNCTION</scope>
    <scope>TISSUE SPECIFICITY</scope>
</reference>
<reference key="31">
    <citation type="journal article" date="2023" name="Nature">
        <title>GDF15 linked to maternal risk of nausea and vomiting during pregnancy.</title>
        <authorList>
            <person name="Fejzo M."/>
            <person name="Rocha N."/>
            <person name="Cimino I."/>
            <person name="Lockhart S.M."/>
            <person name="Petry C.J."/>
            <person name="Kay R.G."/>
            <person name="Burling K."/>
            <person name="Barker P."/>
            <person name="George A.L."/>
            <person name="Yasara N."/>
            <person name="Premawardhena A."/>
            <person name="Gong S."/>
            <person name="Cook E."/>
            <person name="Rimmington D."/>
            <person name="Rainbow K."/>
            <person name="Withers D.J."/>
            <person name="Cortessis V."/>
            <person name="Mullin P.M."/>
            <person name="MacGibbon K.W."/>
            <person name="Jin E."/>
            <person name="Kam A."/>
            <person name="Campbell A."/>
            <person name="Polasek O."/>
            <person name="Tzoneva G."/>
            <person name="Gribble F.M."/>
            <person name="Yeo G.S.H."/>
            <person name="Lam B.Y.H."/>
            <person name="Saudek V."/>
            <person name="Hughes I.A."/>
            <person name="Ong K.K."/>
            <person name="Perry J.R.B."/>
            <person name="Sutton Cole A."/>
            <person name="Baumgarten M."/>
            <person name="Welsh P."/>
            <person name="Sattar N."/>
            <person name="Smith G.C.S."/>
            <person name="Charnock-Jones D.S."/>
            <person name="Coll A.P."/>
            <person name="Meek C.L."/>
            <person name="Mettananda S."/>
            <person name="Hayward C."/>
            <person name="Mancuso N."/>
            <person name="O'Rahilly S."/>
        </authorList>
    </citation>
    <scope>FUNCTION</scope>
    <scope>SUBCELLULAR LOCATION</scope>
    <scope>VARIANT ASP-202</scope>
    <scope>VARIANT HG GLY-211</scope>
    <scope>CHARACTERIZATION OF VARIANT HG GLY-211</scope>
</reference>
<reference evidence="39 40" key="32">
    <citation type="journal article" date="2017" name="Nature">
        <title>Non-homeostatic body weight regulation through a brainstem-restricted receptor for GDF15.</title>
        <authorList>
            <person name="Hsu J.Y."/>
            <person name="Crawley S."/>
            <person name="Chen M."/>
            <person name="Ayupova D.A."/>
            <person name="Lindhout D.A."/>
            <person name="Higbee J."/>
            <person name="Kutach A."/>
            <person name="Joo W."/>
            <person name="Gao Z."/>
            <person name="Fu D."/>
            <person name="To C."/>
            <person name="Mondal K."/>
            <person name="Li B."/>
            <person name="Kekatpure A."/>
            <person name="Wang M."/>
            <person name="Laird T."/>
            <person name="Horner G."/>
            <person name="Chan J."/>
            <person name="McEntee M."/>
            <person name="Lopez M."/>
            <person name="Lakshminarasimhan D."/>
            <person name="White A."/>
            <person name="Wang S.P."/>
            <person name="Yao J."/>
            <person name="Yie J."/>
            <person name="Matern H."/>
            <person name="Solloway M."/>
            <person name="Haldankar R."/>
            <person name="Parsons T."/>
            <person name="Tang J."/>
            <person name="Shen W.D."/>
            <person name="Alice Chen Y."/>
            <person name="Tian H."/>
            <person name="Allan B.B."/>
        </authorList>
    </citation>
    <scope>X-RAY CRYSTALLOGRAPHY (1.97 ANGSTROMS) OF 197-308 IN COMPLEX WITH GFRAL</scope>
    <scope>INTERACTION WITH GFRAL</scope>
    <scope>FUNCTION</scope>
    <scope>MUTAGENESIS OF VAL-283 AND ILE-285</scope>
</reference>
<reference key="33">
    <citation type="journal article" date="2017" name="Nature">
        <title>Non-homeostatic body weight regulation through a brainstem-restricted receptor for GDF15.</title>
        <authorList>
            <person name="Hsu J.Y."/>
            <person name="Crawley S."/>
            <person name="Chen M."/>
            <person name="Ayupova D.A."/>
            <person name="Lindhout D.A."/>
            <person name="Higbee J."/>
            <person name="Kutach A."/>
            <person name="Joo W."/>
            <person name="Gao Z."/>
            <person name="Fu D."/>
            <person name="To C."/>
            <person name="Mondal K."/>
            <person name="Li B."/>
            <person name="Kekatpure A."/>
            <person name="Wang M."/>
            <person name="Laird T."/>
            <person name="Horner G."/>
            <person name="Chan J."/>
            <person name="McEntee M."/>
            <person name="Lopez M."/>
            <person name="Lakshminarasimhan D."/>
            <person name="White A."/>
            <person name="Wang S.P."/>
            <person name="Yao J."/>
            <person name="Yie J."/>
            <person name="Matern H."/>
            <person name="Solloway M."/>
            <person name="Haldankar R."/>
            <person name="Parsons T."/>
            <person name="Tang J."/>
            <person name="Shen W.D."/>
            <person name="Alice Chen Y."/>
            <person name="Tian H."/>
            <person name="Allan B.B."/>
        </authorList>
    </citation>
    <scope>ERRATUM OF PUBMED:28953886</scope>
</reference>
<reference evidence="38" key="34">
    <citation type="journal article" date="2017" name="Sci. Transl. Med.">
        <title>Long-acting MIC-1/GDF15 molecules to treat obesity: Evidence from mice to monkeys.</title>
        <authorList>
            <person name="Xiong Y."/>
            <person name="Walker K."/>
            <person name="Min X."/>
            <person name="Hale C."/>
            <person name="Tran T."/>
            <person name="Komorowski R."/>
            <person name="Yang J."/>
            <person name="Davda J."/>
            <person name="Nuanmanee N."/>
            <person name="Kemp D."/>
            <person name="Wang X."/>
            <person name="Liu H."/>
            <person name="Miller S."/>
            <person name="Lee K.J."/>
            <person name="Wang Z."/>
            <person name="Veniant M.M."/>
        </authorList>
    </citation>
    <scope>X-RAY CRYSTALLOGRAPHY (2.30 ANGSTROMS) OF 197-308</scope>
    <scope>FUNCTION</scope>
    <scope>SUBUNIT</scope>
    <scope>INDUCTION BY OBESITY</scope>
    <scope>TISSUE SPECIFICITY</scope>
    <scope>SUBCELLULAR LOCATION</scope>
</reference>
<reference evidence="41" key="35">
    <citation type="journal article" date="2019" name="Elife">
        <title>Cryo-EM analyses reveal the common mechanism and diversification in the activation of RET by different ligands.</title>
        <authorList>
            <person name="Li J."/>
            <person name="Shang G."/>
            <person name="Chen Y.J."/>
            <person name="Brautigam C.A."/>
            <person name="Liou J."/>
            <person name="Zhang X."/>
            <person name="Bai X.C."/>
        </authorList>
    </citation>
    <scope>STRUCTURE BY ELECTRON MICROSCOPY (4.10 ANGSTROMS) OF 197-308 IN COMPLEX WITH RET AND GFRAL</scope>
    <scope>FUNCTION</scope>
    <scope>SUBUNIT</scope>
    <scope>DISULFIDE BONDS</scope>
    <scope>INTERACTION WITH GFRAL</scope>
    <scope>MUTAGENESIS OF TRP-228 AND TYR-297</scope>
</reference>
<name>GDF15_HUMAN</name>
<dbReference type="EMBL" id="U88323">
    <property type="protein sequence ID" value="AAB88913.1"/>
    <property type="molecule type" value="mRNA"/>
</dbReference>
<dbReference type="EMBL" id="AB000584">
    <property type="protein sequence ID" value="BAA19151.1"/>
    <property type="molecule type" value="mRNA"/>
</dbReference>
<dbReference type="EMBL" id="AF019770">
    <property type="protein sequence ID" value="AAB88673.1"/>
    <property type="molecule type" value="mRNA"/>
</dbReference>
<dbReference type="EMBL" id="AF003934">
    <property type="protein sequence ID" value="AAC24456.1"/>
    <property type="molecule type" value="mRNA"/>
</dbReference>
<dbReference type="EMBL" id="AK291530">
    <property type="protein sequence ID" value="BAF84219.1"/>
    <property type="molecule type" value="mRNA"/>
</dbReference>
<dbReference type="EMBL" id="BT019465">
    <property type="protein sequence ID" value="AAV38272.1"/>
    <property type="molecule type" value="mRNA"/>
</dbReference>
<dbReference type="EMBL" id="AC008397">
    <property type="status" value="NOT_ANNOTATED_CDS"/>
    <property type="molecule type" value="Genomic_DNA"/>
</dbReference>
<dbReference type="EMBL" id="CH471106">
    <property type="protein sequence ID" value="EAW84694.1"/>
    <property type="molecule type" value="Genomic_DNA"/>
</dbReference>
<dbReference type="EMBL" id="BC000529">
    <property type="protein sequence ID" value="AAH00529.1"/>
    <property type="molecule type" value="mRNA"/>
</dbReference>
<dbReference type="EMBL" id="BC008962">
    <property type="protein sequence ID" value="AAH08962.1"/>
    <property type="molecule type" value="mRNA"/>
</dbReference>
<dbReference type="EMBL" id="AF008303">
    <property type="protein sequence ID" value="AAC39537.1"/>
    <property type="molecule type" value="Genomic_DNA"/>
</dbReference>
<dbReference type="EMBL" id="AF173860">
    <property type="protein sequence ID" value="AAF89834.1"/>
    <property type="molecule type" value="mRNA"/>
</dbReference>
<dbReference type="CCDS" id="CCDS12376.1"/>
<dbReference type="PIR" id="JC5697">
    <property type="entry name" value="JC5697"/>
</dbReference>
<dbReference type="RefSeq" id="NP_004855.2">
    <property type="nucleotide sequence ID" value="NM_004864.4"/>
</dbReference>
<dbReference type="PDB" id="5VT2">
    <property type="method" value="X-ray"/>
    <property type="resolution" value="2.30 A"/>
    <property type="chains" value="A/B=197-308"/>
</dbReference>
<dbReference type="PDB" id="5VZ3">
    <property type="method" value="X-ray"/>
    <property type="resolution" value="1.97 A"/>
    <property type="chains" value="A=197-308"/>
</dbReference>
<dbReference type="PDB" id="5VZ4">
    <property type="method" value="X-ray"/>
    <property type="resolution" value="2.20 A"/>
    <property type="chains" value="A=197-308"/>
</dbReference>
<dbReference type="PDB" id="6Q2J">
    <property type="method" value="EM"/>
    <property type="resolution" value="4.10 A"/>
    <property type="chains" value="A/B=197-308"/>
</dbReference>
<dbReference type="PDBsum" id="5VT2"/>
<dbReference type="PDBsum" id="5VZ3"/>
<dbReference type="PDBsum" id="5VZ4"/>
<dbReference type="PDBsum" id="6Q2J"/>
<dbReference type="EMDB" id="EMD-11777"/>
<dbReference type="EMDB" id="EMD-20572"/>
<dbReference type="SMR" id="Q99988"/>
<dbReference type="BioGRID" id="114895">
    <property type="interactions" value="99"/>
</dbReference>
<dbReference type="CORUM" id="Q99988"/>
<dbReference type="FunCoup" id="Q99988">
    <property type="interactions" value="800"/>
</dbReference>
<dbReference type="IntAct" id="Q99988">
    <property type="interactions" value="67"/>
</dbReference>
<dbReference type="MINT" id="Q99988"/>
<dbReference type="STRING" id="9606.ENSP00000252809"/>
<dbReference type="ChEMBL" id="CHEMBL3120039"/>
<dbReference type="GlyCosmos" id="Q99988">
    <property type="glycosylation" value="1 site, No reported glycans"/>
</dbReference>
<dbReference type="GlyGen" id="Q99988">
    <property type="glycosylation" value="7 sites, 1 N-linked glycan (1 site), 2 O-linked glycans (5 sites)"/>
</dbReference>
<dbReference type="iPTMnet" id="Q99988"/>
<dbReference type="PhosphoSitePlus" id="Q99988"/>
<dbReference type="SwissPalm" id="Q99988"/>
<dbReference type="BioMuta" id="GDF15"/>
<dbReference type="DMDM" id="313104195"/>
<dbReference type="jPOST" id="Q99988"/>
<dbReference type="MassIVE" id="Q99988"/>
<dbReference type="PaxDb" id="9606-ENSP00000252809"/>
<dbReference type="PeptideAtlas" id="Q99988"/>
<dbReference type="ProteomicsDB" id="78564"/>
<dbReference type="Pumba" id="Q99988"/>
<dbReference type="Antibodypedia" id="2781">
    <property type="antibodies" value="1008 antibodies from 43 providers"/>
</dbReference>
<dbReference type="DNASU" id="9518"/>
<dbReference type="Ensembl" id="ENST00000252809.3">
    <property type="protein sequence ID" value="ENSP00000252809.3"/>
    <property type="gene ID" value="ENSG00000130513.7"/>
</dbReference>
<dbReference type="Ensembl" id="ENST00000595973.3">
    <property type="protein sequence ID" value="ENSP00000470531.3"/>
    <property type="gene ID" value="ENSG00000130513.7"/>
</dbReference>
<dbReference type="Ensembl" id="ENST00000597765.2">
    <property type="protein sequence ID" value="ENSP00000469819.2"/>
    <property type="gene ID" value="ENSG00000130513.7"/>
</dbReference>
<dbReference type="GeneID" id="9518"/>
<dbReference type="KEGG" id="hsa:9518"/>
<dbReference type="MANE-Select" id="ENST00000252809.3">
    <property type="protein sequence ID" value="ENSP00000252809.3"/>
    <property type="RefSeq nucleotide sequence ID" value="NM_004864.4"/>
    <property type="RefSeq protein sequence ID" value="NP_004855.2"/>
</dbReference>
<dbReference type="UCSC" id="uc002niv.2">
    <property type="organism name" value="human"/>
</dbReference>
<dbReference type="AGR" id="HGNC:30142"/>
<dbReference type="CTD" id="9518"/>
<dbReference type="DisGeNET" id="9518"/>
<dbReference type="GeneCards" id="GDF15"/>
<dbReference type="HGNC" id="HGNC:30142">
    <property type="gene designation" value="GDF15"/>
</dbReference>
<dbReference type="HPA" id="ENSG00000130513">
    <property type="expression patterns" value="Tissue enhanced (kidney, urinary bladder)"/>
</dbReference>
<dbReference type="MalaCards" id="GDF15"/>
<dbReference type="MIM" id="605312">
    <property type="type" value="gene"/>
</dbReference>
<dbReference type="MIM" id="620730">
    <property type="type" value="phenotype"/>
</dbReference>
<dbReference type="neXtProt" id="NX_Q99988"/>
<dbReference type="OpenTargets" id="ENSG00000130513"/>
<dbReference type="PharmGKB" id="PA134866647"/>
<dbReference type="VEuPathDB" id="HostDB:ENSG00000130513"/>
<dbReference type="eggNOG" id="KOG3900">
    <property type="taxonomic scope" value="Eukaryota"/>
</dbReference>
<dbReference type="GeneTree" id="ENSGT00940000161872"/>
<dbReference type="HOGENOM" id="CLU_064099_1_0_1"/>
<dbReference type="InParanoid" id="Q99988"/>
<dbReference type="OMA" id="DHCPLGP"/>
<dbReference type="OrthoDB" id="10030979at2759"/>
<dbReference type="PAN-GO" id="Q99988">
    <property type="GO annotations" value="6 GO annotations based on evolutionary models"/>
</dbReference>
<dbReference type="PhylomeDB" id="Q99988"/>
<dbReference type="TreeFam" id="TF351787"/>
<dbReference type="PathwayCommons" id="Q99988"/>
<dbReference type="SignaLink" id="Q99988"/>
<dbReference type="SIGNOR" id="Q99988"/>
<dbReference type="BioGRID-ORCS" id="9518">
    <property type="hits" value="6 hits in 1162 CRISPR screens"/>
</dbReference>
<dbReference type="ChiTaRS" id="GDF15">
    <property type="organism name" value="human"/>
</dbReference>
<dbReference type="GeneWiki" id="GDF15"/>
<dbReference type="GenomeRNAi" id="9518"/>
<dbReference type="Pharos" id="Q99988">
    <property type="development level" value="Tbio"/>
</dbReference>
<dbReference type="PRO" id="PR:Q99988"/>
<dbReference type="Proteomes" id="UP000005640">
    <property type="component" value="Chromosome 19"/>
</dbReference>
<dbReference type="RNAct" id="Q99988">
    <property type="molecule type" value="protein"/>
</dbReference>
<dbReference type="Bgee" id="ENSG00000130513">
    <property type="expression patterns" value="Expressed in metanephros cortex and 132 other cell types or tissues"/>
</dbReference>
<dbReference type="ExpressionAtlas" id="Q99988">
    <property type="expression patterns" value="baseline and differential"/>
</dbReference>
<dbReference type="GO" id="GO:0005737">
    <property type="term" value="C:cytoplasm"/>
    <property type="evidence" value="ECO:0000314"/>
    <property type="project" value="UniProtKB"/>
</dbReference>
<dbReference type="GO" id="GO:0070062">
    <property type="term" value="C:extracellular exosome"/>
    <property type="evidence" value="ECO:0007005"/>
    <property type="project" value="UniProtKB"/>
</dbReference>
<dbReference type="GO" id="GO:0005576">
    <property type="term" value="C:extracellular region"/>
    <property type="evidence" value="ECO:0000314"/>
    <property type="project" value="UniProtKB"/>
</dbReference>
<dbReference type="GO" id="GO:0005615">
    <property type="term" value="C:extracellular space"/>
    <property type="evidence" value="ECO:0000314"/>
    <property type="project" value="UniProtKB"/>
</dbReference>
<dbReference type="GO" id="GO:0005794">
    <property type="term" value="C:Golgi apparatus"/>
    <property type="evidence" value="ECO:0000314"/>
    <property type="project" value="HPA"/>
</dbReference>
<dbReference type="GO" id="GO:0005634">
    <property type="term" value="C:nucleus"/>
    <property type="evidence" value="ECO:0000314"/>
    <property type="project" value="UniProtKB"/>
</dbReference>
<dbReference type="GO" id="GO:0005125">
    <property type="term" value="F:cytokine activity"/>
    <property type="evidence" value="ECO:0000314"/>
    <property type="project" value="UniProtKB"/>
</dbReference>
<dbReference type="GO" id="GO:0008083">
    <property type="term" value="F:growth factor activity"/>
    <property type="evidence" value="ECO:0007669"/>
    <property type="project" value="InterPro"/>
</dbReference>
<dbReference type="GO" id="GO:0005179">
    <property type="term" value="F:hormone activity"/>
    <property type="evidence" value="ECO:0000314"/>
    <property type="project" value="UniProtKB"/>
</dbReference>
<dbReference type="GO" id="GO:0042803">
    <property type="term" value="F:protein homodimerization activity"/>
    <property type="evidence" value="ECO:0000314"/>
    <property type="project" value="UniProtKB"/>
</dbReference>
<dbReference type="GO" id="GO:0007267">
    <property type="term" value="P:cell-cell signaling"/>
    <property type="evidence" value="ECO:0000304"/>
    <property type="project" value="ProtInc"/>
</dbReference>
<dbReference type="GO" id="GO:0062197">
    <property type="term" value="P:cellular response to chemical stress"/>
    <property type="evidence" value="ECO:0007669"/>
    <property type="project" value="Ensembl"/>
</dbReference>
<dbReference type="GO" id="GO:0160144">
    <property type="term" value="P:GDF15-GFRAL signaling pathway"/>
    <property type="evidence" value="ECO:0000314"/>
    <property type="project" value="UniProtKB"/>
</dbReference>
<dbReference type="GO" id="GO:0032099">
    <property type="term" value="P:negative regulation of appetite"/>
    <property type="evidence" value="ECO:0000314"/>
    <property type="project" value="UniProtKB"/>
</dbReference>
<dbReference type="GO" id="GO:0060400">
    <property type="term" value="P:negative regulation of growth hormone receptor signaling pathway"/>
    <property type="evidence" value="ECO:0000250"/>
    <property type="project" value="UniProtKB"/>
</dbReference>
<dbReference type="GO" id="GO:0002686">
    <property type="term" value="P:negative regulation of leukocyte migration"/>
    <property type="evidence" value="ECO:0007669"/>
    <property type="project" value="Ensembl"/>
</dbReference>
<dbReference type="GO" id="GO:0040015">
    <property type="term" value="P:negative regulation of multicellular organism growth"/>
    <property type="evidence" value="ECO:0000250"/>
    <property type="project" value="UniProtKB"/>
</dbReference>
<dbReference type="GO" id="GO:0060392">
    <property type="term" value="P:negative regulation of SMAD protein signal transduction"/>
    <property type="evidence" value="ECO:0000314"/>
    <property type="project" value="UniProtKB"/>
</dbReference>
<dbReference type="GO" id="GO:0030512">
    <property type="term" value="P:negative regulation of transforming growth factor beta receptor signaling pathway"/>
    <property type="evidence" value="ECO:0000314"/>
    <property type="project" value="GO_Central"/>
</dbReference>
<dbReference type="GO" id="GO:0046321">
    <property type="term" value="P:positive regulation of fatty acid oxidation"/>
    <property type="evidence" value="ECO:0007669"/>
    <property type="project" value="Ensembl"/>
</dbReference>
<dbReference type="GO" id="GO:0043410">
    <property type="term" value="P:positive regulation of MAPK cascade"/>
    <property type="evidence" value="ECO:0000314"/>
    <property type="project" value="GO_Central"/>
</dbReference>
<dbReference type="GO" id="GO:1901741">
    <property type="term" value="P:positive regulation of myoblast fusion"/>
    <property type="evidence" value="ECO:0007669"/>
    <property type="project" value="Ensembl"/>
</dbReference>
<dbReference type="GO" id="GO:0051897">
    <property type="term" value="P:positive regulation of phosphatidylinositol 3-kinase/protein kinase B signal transduction"/>
    <property type="evidence" value="ECO:0000314"/>
    <property type="project" value="UniProtKB"/>
</dbReference>
<dbReference type="GO" id="GO:0002023">
    <property type="term" value="P:reduction of food intake in response to dietary excess"/>
    <property type="evidence" value="ECO:0000314"/>
    <property type="project" value="UniProtKB"/>
</dbReference>
<dbReference type="GO" id="GO:1901558">
    <property type="term" value="P:response to metformin"/>
    <property type="evidence" value="ECO:0000314"/>
    <property type="project" value="UniProtKB"/>
</dbReference>
<dbReference type="GO" id="GO:0007165">
    <property type="term" value="P:signal transduction"/>
    <property type="evidence" value="ECO:0000304"/>
    <property type="project" value="ProtInc"/>
</dbReference>
<dbReference type="GO" id="GO:0007179">
    <property type="term" value="P:transforming growth factor beta receptor signaling pathway"/>
    <property type="evidence" value="ECO:0000304"/>
    <property type="project" value="ProtInc"/>
</dbReference>
<dbReference type="CDD" id="cd19376">
    <property type="entry name" value="TGF_beta_GDF15"/>
    <property type="match status" value="1"/>
</dbReference>
<dbReference type="FunFam" id="2.10.90.10:FF:000039">
    <property type="entry name" value="growth/differentiation factor 15"/>
    <property type="match status" value="1"/>
</dbReference>
<dbReference type="Gene3D" id="2.10.90.10">
    <property type="entry name" value="Cystine-knot cytokines"/>
    <property type="match status" value="1"/>
</dbReference>
<dbReference type="InterPro" id="IPR029034">
    <property type="entry name" value="Cystine-knot_cytokine"/>
</dbReference>
<dbReference type="InterPro" id="IPR001839">
    <property type="entry name" value="TGF-b_C"/>
</dbReference>
<dbReference type="InterPro" id="IPR015615">
    <property type="entry name" value="TGF-beta-rel"/>
</dbReference>
<dbReference type="PANTHER" id="PTHR11848:SF78">
    <property type="entry name" value="GROWTH_DIFFERENTIATION FACTOR 15"/>
    <property type="match status" value="1"/>
</dbReference>
<dbReference type="PANTHER" id="PTHR11848">
    <property type="entry name" value="TGF-BETA FAMILY"/>
    <property type="match status" value="1"/>
</dbReference>
<dbReference type="Pfam" id="PF00019">
    <property type="entry name" value="TGF_beta"/>
    <property type="match status" value="1"/>
</dbReference>
<dbReference type="SMART" id="SM00204">
    <property type="entry name" value="TGFB"/>
    <property type="match status" value="1"/>
</dbReference>
<dbReference type="SUPFAM" id="SSF57501">
    <property type="entry name" value="Cystine-knot cytokines"/>
    <property type="match status" value="1"/>
</dbReference>
<dbReference type="PROSITE" id="PS51362">
    <property type="entry name" value="TGF_BETA_2"/>
    <property type="match status" value="1"/>
</dbReference>
<organism>
    <name type="scientific">Homo sapiens</name>
    <name type="common">Human</name>
    <dbReference type="NCBI Taxonomy" id="9606"/>
    <lineage>
        <taxon>Eukaryota</taxon>
        <taxon>Metazoa</taxon>
        <taxon>Chordata</taxon>
        <taxon>Craniata</taxon>
        <taxon>Vertebrata</taxon>
        <taxon>Euteleostomi</taxon>
        <taxon>Mammalia</taxon>
        <taxon>Eutheria</taxon>
        <taxon>Euarchontoglires</taxon>
        <taxon>Primates</taxon>
        <taxon>Haplorrhini</taxon>
        <taxon>Catarrhini</taxon>
        <taxon>Hominidae</taxon>
        <taxon>Homo</taxon>
    </lineage>
</organism>